<name>UTER_BOVIN</name>
<proteinExistence type="inferred from homology"/>
<feature type="signal peptide" evidence="3">
    <location>
        <begin position="1"/>
        <end position="21"/>
    </location>
</feature>
<feature type="chain" id="PRO_0000223333" description="Uteroglobin">
    <location>
        <begin position="22"/>
        <end position="91"/>
    </location>
</feature>
<feature type="disulfide bond" description="Interchain (with C-90)" evidence="1">
    <location>
        <position position="24"/>
    </location>
</feature>
<feature type="disulfide bond" description="Interchain (with C-24)" evidence="1">
    <location>
        <position position="90"/>
    </location>
</feature>
<feature type="sequence conflict" description="In Ref. 2; AAI26821." evidence="4" ref="2">
    <original>M</original>
    <variation>L</variation>
    <location>
        <position position="81"/>
    </location>
</feature>
<comment type="function">
    <text evidence="1">Binds phosphatidylcholine, phosphatidylinositol, polychlorinated biphenyls (PCB) and weakly progesterone, potent inhibitor of phospholipase A2.</text>
</comment>
<comment type="subunit">
    <text evidence="2">Antiparallel homodimer; disulfide-linked (By similarity). Interaction with LMBR1L is controversial (By similarity).</text>
</comment>
<comment type="subcellular location">
    <subcellularLocation>
        <location>Secreted</location>
    </subcellularLocation>
</comment>
<comment type="similarity">
    <text evidence="4">Belongs to the secretoglobin family.</text>
</comment>
<reference key="1">
    <citation type="submission" date="2005-03" db="EMBL/GenBank/DDBJ databases">
        <title>Bovine uteroglobin: sequence and crystallization data.</title>
        <authorList>
            <person name="Decken V."/>
            <person name="Delbrueck H."/>
            <person name="Herrler A."/>
        </authorList>
    </citation>
    <scope>NUCLEOTIDE SEQUENCE [MRNA]</scope>
    <source>
        <tissue>Endometrium</tissue>
    </source>
</reference>
<reference key="2">
    <citation type="submission" date="2006-10" db="EMBL/GenBank/DDBJ databases">
        <authorList>
            <consortium name="NIH - Mammalian Gene Collection (MGC) project"/>
        </authorList>
    </citation>
    <scope>NUCLEOTIDE SEQUENCE [LARGE SCALE MRNA]</scope>
    <source>
        <strain>Hereford</strain>
        <tissue>Fetal lung</tissue>
    </source>
</reference>
<dbReference type="EMBL" id="AY994053">
    <property type="protein sequence ID" value="AAY54276.1"/>
    <property type="molecule type" value="mRNA"/>
</dbReference>
<dbReference type="EMBL" id="BC126820">
    <property type="protein sequence ID" value="AAI26821.1"/>
    <property type="molecule type" value="mRNA"/>
</dbReference>
<dbReference type="RefSeq" id="NP_001070444.2">
    <property type="nucleotide sequence ID" value="NM_001076976.3"/>
</dbReference>
<dbReference type="SMR" id="Q2VPS3"/>
<dbReference type="FunCoup" id="Q2VPS3">
    <property type="interactions" value="13"/>
</dbReference>
<dbReference type="STRING" id="9913.ENSBTAP00000044005"/>
<dbReference type="PaxDb" id="9913-ENSBTAP00000044005"/>
<dbReference type="GeneID" id="767867"/>
<dbReference type="KEGG" id="bta:767867"/>
<dbReference type="CTD" id="7356"/>
<dbReference type="eggNOG" id="ENOG502SXFT">
    <property type="taxonomic scope" value="Eukaryota"/>
</dbReference>
<dbReference type="HOGENOM" id="CLU_166234_1_0_1"/>
<dbReference type="InParanoid" id="Q2VPS3"/>
<dbReference type="OrthoDB" id="9585556at2759"/>
<dbReference type="TreeFam" id="TF338407"/>
<dbReference type="Proteomes" id="UP000009136">
    <property type="component" value="Unplaced"/>
</dbReference>
<dbReference type="GO" id="GO:0005737">
    <property type="term" value="C:cytoplasm"/>
    <property type="evidence" value="ECO:0000318"/>
    <property type="project" value="GO_Central"/>
</dbReference>
<dbReference type="GO" id="GO:0005615">
    <property type="term" value="C:extracellular space"/>
    <property type="evidence" value="ECO:0000318"/>
    <property type="project" value="GO_Central"/>
</dbReference>
<dbReference type="GO" id="GO:0019834">
    <property type="term" value="F:phospholipase A2 inhibitor activity"/>
    <property type="evidence" value="ECO:0007669"/>
    <property type="project" value="UniProtKB-KW"/>
</dbReference>
<dbReference type="GO" id="GO:0007165">
    <property type="term" value="P:signal transduction"/>
    <property type="evidence" value="ECO:0007669"/>
    <property type="project" value="InterPro"/>
</dbReference>
<dbReference type="CDD" id="cd00633">
    <property type="entry name" value="Secretoglobin"/>
    <property type="match status" value="1"/>
</dbReference>
<dbReference type="FunFam" id="1.10.210.10:FF:000001">
    <property type="entry name" value="Uteroglobin"/>
    <property type="match status" value="1"/>
</dbReference>
<dbReference type="Gene3D" id="1.10.210.10">
    <property type="entry name" value="Secretoglobin"/>
    <property type="match status" value="1"/>
</dbReference>
<dbReference type="InterPro" id="IPR016126">
    <property type="entry name" value="Secretoglobin"/>
</dbReference>
<dbReference type="InterPro" id="IPR043215">
    <property type="entry name" value="Secretoglobin_1C-like"/>
</dbReference>
<dbReference type="InterPro" id="IPR035960">
    <property type="entry name" value="Secretoglobin_sf"/>
</dbReference>
<dbReference type="InterPro" id="IPR000329">
    <property type="entry name" value="Uteroglobin"/>
</dbReference>
<dbReference type="PANTHER" id="PTHR10136">
    <property type="entry name" value="SECRETOGLOBIN FAMILY 1 MEMBER"/>
    <property type="match status" value="1"/>
</dbReference>
<dbReference type="PANTHER" id="PTHR10136:SF6">
    <property type="entry name" value="UTEROGLOBIN"/>
    <property type="match status" value="1"/>
</dbReference>
<dbReference type="Pfam" id="PF01099">
    <property type="entry name" value="Uteroglobin"/>
    <property type="match status" value="1"/>
</dbReference>
<dbReference type="PRINTS" id="PR00486">
    <property type="entry name" value="UTEROGLOBIN"/>
</dbReference>
<dbReference type="SMART" id="SM00096">
    <property type="entry name" value="UTG"/>
    <property type="match status" value="1"/>
</dbReference>
<dbReference type="SUPFAM" id="SSF48201">
    <property type="entry name" value="Uteroglobin-like"/>
    <property type="match status" value="1"/>
</dbReference>
<dbReference type="PROSITE" id="PS51311">
    <property type="entry name" value="SCGB"/>
    <property type="match status" value="1"/>
</dbReference>
<evidence type="ECO:0000250" key="1"/>
<evidence type="ECO:0000250" key="2">
    <source>
        <dbReference type="UniProtKB" id="P11684"/>
    </source>
</evidence>
<evidence type="ECO:0000255" key="3"/>
<evidence type="ECO:0000305" key="4"/>
<protein>
    <recommendedName>
        <fullName>Uteroglobin</fullName>
    </recommendedName>
    <alternativeName>
        <fullName>Secretoglobin family 1A member 1</fullName>
    </alternativeName>
</protein>
<organism>
    <name type="scientific">Bos taurus</name>
    <name type="common">Bovine</name>
    <dbReference type="NCBI Taxonomy" id="9913"/>
    <lineage>
        <taxon>Eukaryota</taxon>
        <taxon>Metazoa</taxon>
        <taxon>Chordata</taxon>
        <taxon>Craniata</taxon>
        <taxon>Vertebrata</taxon>
        <taxon>Euteleostomi</taxon>
        <taxon>Mammalia</taxon>
        <taxon>Eutheria</taxon>
        <taxon>Laurasiatheria</taxon>
        <taxon>Artiodactyla</taxon>
        <taxon>Ruminantia</taxon>
        <taxon>Pecora</taxon>
        <taxon>Bovidae</taxon>
        <taxon>Bovinae</taxon>
        <taxon>Bos</taxon>
    </lineage>
</organism>
<gene>
    <name type="primary">SCGB1A1</name>
    <name type="synonym">UGL</name>
</gene>
<accession>Q2VPS3</accession>
<accession>A0JNN9</accession>
<keyword id="KW-1015">Disulfide bond</keyword>
<keyword id="KW-0593">Phospholipase A2 inhibitor</keyword>
<keyword id="KW-1185">Reference proteome</keyword>
<keyword id="KW-0964">Secreted</keyword>
<keyword id="KW-0732">Signal</keyword>
<sequence length="91" mass="9879">MKLTIAIVLVTLTLFCRPASTEVCPSLLYVLGNLIAGTPSSFEATLEPFSPDEDMKEATSQLKTLVDTLSPKAKDSMLELMMKIIQSPECA</sequence>